<gene>
    <name evidence="1" type="primary">leuB</name>
    <name type="ordered locus">SAOUHSC_02286</name>
</gene>
<keyword id="KW-0028">Amino-acid biosynthesis</keyword>
<keyword id="KW-0100">Branched-chain amino acid biosynthesis</keyword>
<keyword id="KW-0963">Cytoplasm</keyword>
<keyword id="KW-0432">Leucine biosynthesis</keyword>
<keyword id="KW-0460">Magnesium</keyword>
<keyword id="KW-0464">Manganese</keyword>
<keyword id="KW-0479">Metal-binding</keyword>
<keyword id="KW-0520">NAD</keyword>
<keyword id="KW-0560">Oxidoreductase</keyword>
<keyword id="KW-1185">Reference proteome</keyword>
<protein>
    <recommendedName>
        <fullName evidence="1">3-isopropylmalate dehydrogenase</fullName>
        <ecNumber evidence="1">1.1.1.85</ecNumber>
    </recommendedName>
    <alternativeName>
        <fullName evidence="1">3-IPM-DH</fullName>
    </alternativeName>
    <alternativeName>
        <fullName evidence="1">Beta-IPM dehydrogenase</fullName>
        <shortName evidence="1">IMDH</shortName>
    </alternativeName>
</protein>
<evidence type="ECO:0000255" key="1">
    <source>
        <dbReference type="HAMAP-Rule" id="MF_01033"/>
    </source>
</evidence>
<feature type="chain" id="PRO_0000250140" description="3-isopropylmalate dehydrogenase">
    <location>
        <begin position="1"/>
        <end position="348"/>
    </location>
</feature>
<feature type="binding site" evidence="1">
    <location>
        <begin position="76"/>
        <end position="87"/>
    </location>
    <ligand>
        <name>NAD(+)</name>
        <dbReference type="ChEBI" id="CHEBI:57540"/>
    </ligand>
</feature>
<feature type="binding site" evidence="1">
    <location>
        <position position="94"/>
    </location>
    <ligand>
        <name>substrate</name>
    </ligand>
</feature>
<feature type="binding site" evidence="1">
    <location>
        <position position="104"/>
    </location>
    <ligand>
        <name>substrate</name>
    </ligand>
</feature>
<feature type="binding site" evidence="1">
    <location>
        <position position="132"/>
    </location>
    <ligand>
        <name>substrate</name>
    </ligand>
</feature>
<feature type="binding site" evidence="1">
    <location>
        <position position="217"/>
    </location>
    <ligand>
        <name>Mg(2+)</name>
        <dbReference type="ChEBI" id="CHEBI:18420"/>
    </ligand>
</feature>
<feature type="binding site" evidence="1">
    <location>
        <position position="217"/>
    </location>
    <ligand>
        <name>substrate</name>
    </ligand>
</feature>
<feature type="binding site" evidence="1">
    <location>
        <position position="241"/>
    </location>
    <ligand>
        <name>Mg(2+)</name>
        <dbReference type="ChEBI" id="CHEBI:18420"/>
    </ligand>
</feature>
<feature type="binding site" evidence="1">
    <location>
        <position position="245"/>
    </location>
    <ligand>
        <name>Mg(2+)</name>
        <dbReference type="ChEBI" id="CHEBI:18420"/>
    </ligand>
</feature>
<feature type="binding site" evidence="1">
    <location>
        <begin position="275"/>
        <end position="287"/>
    </location>
    <ligand>
        <name>NAD(+)</name>
        <dbReference type="ChEBI" id="CHEBI:57540"/>
    </ligand>
</feature>
<feature type="site" description="Important for catalysis" evidence="1">
    <location>
        <position position="139"/>
    </location>
</feature>
<feature type="site" description="Important for catalysis" evidence="1">
    <location>
        <position position="185"/>
    </location>
</feature>
<organism>
    <name type="scientific">Staphylococcus aureus (strain NCTC 8325 / PS 47)</name>
    <dbReference type="NCBI Taxonomy" id="93061"/>
    <lineage>
        <taxon>Bacteria</taxon>
        <taxon>Bacillati</taxon>
        <taxon>Bacillota</taxon>
        <taxon>Bacilli</taxon>
        <taxon>Bacillales</taxon>
        <taxon>Staphylococcaceae</taxon>
        <taxon>Staphylococcus</taxon>
    </lineage>
</organism>
<sequence>MTYNIVALPGDGIGPEILNGSLSLLEIISNKYNFNYQIEHHEFGGASIDTFGEPLTEKTLNACKRADAILLGAIGGPKWTDPNNRPEQGLLKLRKSLNLFVNIRPTTVVKGASSLSPLKEERVEGTDLVIVRELTSGIYFGEPRHFNNHEALDSLTYTREEIERIVHVAFKLAASRRGKLTSVDKENVLASSKLWRKVVNEVSQLYPEVTVNHLFVDACSMHLITNPKQFDVIVCENLFGDILSDEASVIPGSLGLSPSASFSNDGPRLYEPIHGSAPDIAGKNVANPFGMILSLAMCLRESLNQPDAADELEQHIYSMIEHGQTTADLGGKLNTTDIFEILSQKLNH</sequence>
<dbReference type="EC" id="1.1.1.85" evidence="1"/>
<dbReference type="EMBL" id="CP000253">
    <property type="protein sequence ID" value="ABD31324.1"/>
    <property type="molecule type" value="Genomic_DNA"/>
</dbReference>
<dbReference type="RefSeq" id="WP_000221956.1">
    <property type="nucleotide sequence ID" value="NZ_LS483365.1"/>
</dbReference>
<dbReference type="RefSeq" id="YP_500768.1">
    <property type="nucleotide sequence ID" value="NC_007795.1"/>
</dbReference>
<dbReference type="SMR" id="Q2FWK2"/>
<dbReference type="STRING" id="93061.SAOUHSC_02286"/>
<dbReference type="PaxDb" id="1280-SAXN108_2302"/>
<dbReference type="GeneID" id="3919161"/>
<dbReference type="KEGG" id="sao:SAOUHSC_02286"/>
<dbReference type="PATRIC" id="fig|93061.5.peg.2076"/>
<dbReference type="eggNOG" id="COG0473">
    <property type="taxonomic scope" value="Bacteria"/>
</dbReference>
<dbReference type="HOGENOM" id="CLU_031953_0_3_9"/>
<dbReference type="OrthoDB" id="9806254at2"/>
<dbReference type="UniPathway" id="UPA00048">
    <property type="reaction ID" value="UER00072"/>
</dbReference>
<dbReference type="PRO" id="PR:Q2FWK2"/>
<dbReference type="Proteomes" id="UP000008816">
    <property type="component" value="Chromosome"/>
</dbReference>
<dbReference type="GO" id="GO:0005829">
    <property type="term" value="C:cytosol"/>
    <property type="evidence" value="ECO:0000318"/>
    <property type="project" value="GO_Central"/>
</dbReference>
<dbReference type="GO" id="GO:0003862">
    <property type="term" value="F:3-isopropylmalate dehydrogenase activity"/>
    <property type="evidence" value="ECO:0000318"/>
    <property type="project" value="GO_Central"/>
</dbReference>
<dbReference type="GO" id="GO:0000287">
    <property type="term" value="F:magnesium ion binding"/>
    <property type="evidence" value="ECO:0007669"/>
    <property type="project" value="InterPro"/>
</dbReference>
<dbReference type="GO" id="GO:0051287">
    <property type="term" value="F:NAD binding"/>
    <property type="evidence" value="ECO:0007669"/>
    <property type="project" value="InterPro"/>
</dbReference>
<dbReference type="GO" id="GO:0009098">
    <property type="term" value="P:L-leucine biosynthetic process"/>
    <property type="evidence" value="ECO:0000318"/>
    <property type="project" value="GO_Central"/>
</dbReference>
<dbReference type="FunFam" id="3.40.718.10:FF:000006">
    <property type="entry name" value="3-isopropylmalate dehydrogenase"/>
    <property type="match status" value="1"/>
</dbReference>
<dbReference type="Gene3D" id="3.40.718.10">
    <property type="entry name" value="Isopropylmalate Dehydrogenase"/>
    <property type="match status" value="1"/>
</dbReference>
<dbReference type="HAMAP" id="MF_01033">
    <property type="entry name" value="LeuB_type1"/>
    <property type="match status" value="1"/>
</dbReference>
<dbReference type="InterPro" id="IPR019818">
    <property type="entry name" value="IsoCit/isopropylmalate_DH_CS"/>
</dbReference>
<dbReference type="InterPro" id="IPR024084">
    <property type="entry name" value="IsoPropMal-DH-like_dom"/>
</dbReference>
<dbReference type="InterPro" id="IPR004429">
    <property type="entry name" value="Isopropylmalate_DH"/>
</dbReference>
<dbReference type="NCBIfam" id="TIGR00169">
    <property type="entry name" value="leuB"/>
    <property type="match status" value="1"/>
</dbReference>
<dbReference type="PANTHER" id="PTHR42979">
    <property type="entry name" value="3-ISOPROPYLMALATE DEHYDROGENASE"/>
    <property type="match status" value="1"/>
</dbReference>
<dbReference type="PANTHER" id="PTHR42979:SF1">
    <property type="entry name" value="3-ISOPROPYLMALATE DEHYDROGENASE"/>
    <property type="match status" value="1"/>
</dbReference>
<dbReference type="Pfam" id="PF00180">
    <property type="entry name" value="Iso_dh"/>
    <property type="match status" value="1"/>
</dbReference>
<dbReference type="SMART" id="SM01329">
    <property type="entry name" value="Iso_dh"/>
    <property type="match status" value="1"/>
</dbReference>
<dbReference type="SUPFAM" id="SSF53659">
    <property type="entry name" value="Isocitrate/Isopropylmalate dehydrogenase-like"/>
    <property type="match status" value="1"/>
</dbReference>
<dbReference type="PROSITE" id="PS00470">
    <property type="entry name" value="IDH_IMDH"/>
    <property type="match status" value="1"/>
</dbReference>
<name>LEU3_STAA8</name>
<comment type="function">
    <text evidence="1">Catalyzes the oxidation of 3-carboxy-2-hydroxy-4-methylpentanoate (3-isopropylmalate) to 3-carboxy-4-methyl-2-oxopentanoate. The product decarboxylates to 4-methyl-2 oxopentanoate.</text>
</comment>
<comment type="catalytic activity">
    <reaction evidence="1">
        <text>(2R,3S)-3-isopropylmalate + NAD(+) = 4-methyl-2-oxopentanoate + CO2 + NADH</text>
        <dbReference type="Rhea" id="RHEA:32271"/>
        <dbReference type="ChEBI" id="CHEBI:16526"/>
        <dbReference type="ChEBI" id="CHEBI:17865"/>
        <dbReference type="ChEBI" id="CHEBI:35121"/>
        <dbReference type="ChEBI" id="CHEBI:57540"/>
        <dbReference type="ChEBI" id="CHEBI:57945"/>
        <dbReference type="EC" id="1.1.1.85"/>
    </reaction>
</comment>
<comment type="cofactor">
    <cofactor evidence="1">
        <name>Mg(2+)</name>
        <dbReference type="ChEBI" id="CHEBI:18420"/>
    </cofactor>
    <cofactor evidence="1">
        <name>Mn(2+)</name>
        <dbReference type="ChEBI" id="CHEBI:29035"/>
    </cofactor>
    <text evidence="1">Binds 1 Mg(2+) or Mn(2+) ion per subunit.</text>
</comment>
<comment type="pathway">
    <text evidence="1">Amino-acid biosynthesis; L-leucine biosynthesis; L-leucine from 3-methyl-2-oxobutanoate: step 3/4.</text>
</comment>
<comment type="subunit">
    <text evidence="1">Homodimer.</text>
</comment>
<comment type="subcellular location">
    <subcellularLocation>
        <location evidence="1">Cytoplasm</location>
    </subcellularLocation>
</comment>
<comment type="similarity">
    <text evidence="1">Belongs to the isocitrate and isopropylmalate dehydrogenases family. LeuB type 1 subfamily.</text>
</comment>
<reference key="1">
    <citation type="book" date="2006" name="Gram positive pathogens, 2nd edition">
        <title>The Staphylococcus aureus NCTC 8325 genome.</title>
        <editorList>
            <person name="Fischetti V."/>
            <person name="Novick R."/>
            <person name="Ferretti J."/>
            <person name="Portnoy D."/>
            <person name="Rood J."/>
        </editorList>
        <authorList>
            <person name="Gillaspy A.F."/>
            <person name="Worrell V."/>
            <person name="Orvis J."/>
            <person name="Roe B.A."/>
            <person name="Dyer D.W."/>
            <person name="Iandolo J.J."/>
        </authorList>
    </citation>
    <scope>NUCLEOTIDE SEQUENCE [LARGE SCALE GENOMIC DNA]</scope>
    <source>
        <strain>NCTC 8325 / PS 47</strain>
    </source>
</reference>
<proteinExistence type="inferred from homology"/>
<accession>Q2FWK2</accession>